<accession>A9IMS2</accession>
<dbReference type="EMBL" id="AM260525">
    <property type="protein sequence ID" value="CAK00711.1"/>
    <property type="molecule type" value="Genomic_DNA"/>
</dbReference>
<dbReference type="RefSeq" id="WP_005774142.1">
    <property type="nucleotide sequence ID" value="NC_010161.1"/>
</dbReference>
<dbReference type="SMR" id="A9IMS2"/>
<dbReference type="KEGG" id="btr:BT_0233"/>
<dbReference type="eggNOG" id="COG0184">
    <property type="taxonomic scope" value="Bacteria"/>
</dbReference>
<dbReference type="HOGENOM" id="CLU_148518_0_0_5"/>
<dbReference type="Proteomes" id="UP000001592">
    <property type="component" value="Chromosome"/>
</dbReference>
<dbReference type="GO" id="GO:0022627">
    <property type="term" value="C:cytosolic small ribosomal subunit"/>
    <property type="evidence" value="ECO:0007669"/>
    <property type="project" value="TreeGrafter"/>
</dbReference>
<dbReference type="GO" id="GO:0019843">
    <property type="term" value="F:rRNA binding"/>
    <property type="evidence" value="ECO:0007669"/>
    <property type="project" value="UniProtKB-UniRule"/>
</dbReference>
<dbReference type="GO" id="GO:0003735">
    <property type="term" value="F:structural constituent of ribosome"/>
    <property type="evidence" value="ECO:0007669"/>
    <property type="project" value="InterPro"/>
</dbReference>
<dbReference type="GO" id="GO:0006412">
    <property type="term" value="P:translation"/>
    <property type="evidence" value="ECO:0007669"/>
    <property type="project" value="UniProtKB-UniRule"/>
</dbReference>
<dbReference type="CDD" id="cd00353">
    <property type="entry name" value="Ribosomal_S15p_S13e"/>
    <property type="match status" value="1"/>
</dbReference>
<dbReference type="FunFam" id="1.10.287.10:FF:000002">
    <property type="entry name" value="30S ribosomal protein S15"/>
    <property type="match status" value="1"/>
</dbReference>
<dbReference type="Gene3D" id="6.10.250.3130">
    <property type="match status" value="1"/>
</dbReference>
<dbReference type="Gene3D" id="1.10.287.10">
    <property type="entry name" value="S15/NS1, RNA-binding"/>
    <property type="match status" value="1"/>
</dbReference>
<dbReference type="HAMAP" id="MF_01343_B">
    <property type="entry name" value="Ribosomal_uS15_B"/>
    <property type="match status" value="1"/>
</dbReference>
<dbReference type="InterPro" id="IPR000589">
    <property type="entry name" value="Ribosomal_uS15"/>
</dbReference>
<dbReference type="InterPro" id="IPR005290">
    <property type="entry name" value="Ribosomal_uS15_bac-type"/>
</dbReference>
<dbReference type="InterPro" id="IPR009068">
    <property type="entry name" value="uS15_NS1_RNA-bd_sf"/>
</dbReference>
<dbReference type="NCBIfam" id="TIGR00952">
    <property type="entry name" value="S15_bact"/>
    <property type="match status" value="1"/>
</dbReference>
<dbReference type="PANTHER" id="PTHR23321">
    <property type="entry name" value="RIBOSOMAL PROTEIN S15, BACTERIAL AND ORGANELLAR"/>
    <property type="match status" value="1"/>
</dbReference>
<dbReference type="PANTHER" id="PTHR23321:SF26">
    <property type="entry name" value="SMALL RIBOSOMAL SUBUNIT PROTEIN US15M"/>
    <property type="match status" value="1"/>
</dbReference>
<dbReference type="Pfam" id="PF00312">
    <property type="entry name" value="Ribosomal_S15"/>
    <property type="match status" value="1"/>
</dbReference>
<dbReference type="SMART" id="SM01387">
    <property type="entry name" value="Ribosomal_S15"/>
    <property type="match status" value="1"/>
</dbReference>
<dbReference type="SUPFAM" id="SSF47060">
    <property type="entry name" value="S15/NS1 RNA-binding domain"/>
    <property type="match status" value="1"/>
</dbReference>
<dbReference type="PROSITE" id="PS00362">
    <property type="entry name" value="RIBOSOMAL_S15"/>
    <property type="match status" value="1"/>
</dbReference>
<organism>
    <name type="scientific">Bartonella tribocorum (strain CIP 105476 / IBS 506)</name>
    <dbReference type="NCBI Taxonomy" id="382640"/>
    <lineage>
        <taxon>Bacteria</taxon>
        <taxon>Pseudomonadati</taxon>
        <taxon>Pseudomonadota</taxon>
        <taxon>Alphaproteobacteria</taxon>
        <taxon>Hyphomicrobiales</taxon>
        <taxon>Bartonellaceae</taxon>
        <taxon>Bartonella</taxon>
    </lineage>
</organism>
<comment type="function">
    <text evidence="1">One of the primary rRNA binding proteins, it binds directly to 16S rRNA where it helps nucleate assembly of the platform of the 30S subunit by binding and bridging several RNA helices of the 16S rRNA.</text>
</comment>
<comment type="function">
    <text evidence="1">Forms an intersubunit bridge (bridge B4) with the 23S rRNA of the 50S subunit in the ribosome.</text>
</comment>
<comment type="subunit">
    <text evidence="1">Part of the 30S ribosomal subunit. Forms a bridge to the 50S subunit in the 70S ribosome, contacting the 23S rRNA.</text>
</comment>
<comment type="similarity">
    <text evidence="1">Belongs to the universal ribosomal protein uS15 family.</text>
</comment>
<evidence type="ECO:0000255" key="1">
    <source>
        <dbReference type="HAMAP-Rule" id="MF_01343"/>
    </source>
</evidence>
<evidence type="ECO:0000305" key="2"/>
<protein>
    <recommendedName>
        <fullName evidence="1">Small ribosomal subunit protein uS15</fullName>
    </recommendedName>
    <alternativeName>
        <fullName evidence="2">30S ribosomal protein S15</fullName>
    </alternativeName>
</protein>
<reference key="1">
    <citation type="journal article" date="2007" name="Nat. Genet.">
        <title>Genomic analysis of Bartonella identifies type IV secretion systems as host adaptability factors.</title>
        <authorList>
            <person name="Saenz H.L."/>
            <person name="Engel P."/>
            <person name="Stoeckli M.C."/>
            <person name="Lanz C."/>
            <person name="Raddatz G."/>
            <person name="Vayssier-Taussat M."/>
            <person name="Birtles R."/>
            <person name="Schuster S.C."/>
            <person name="Dehio C."/>
        </authorList>
    </citation>
    <scope>NUCLEOTIDE SEQUENCE [LARGE SCALE GENOMIC DNA]</scope>
    <source>
        <strain>CIP 105476 / IBS 506</strain>
    </source>
</reference>
<keyword id="KW-0687">Ribonucleoprotein</keyword>
<keyword id="KW-0689">Ribosomal protein</keyword>
<keyword id="KW-0694">RNA-binding</keyword>
<keyword id="KW-0699">rRNA-binding</keyword>
<sequence length="89" mass="10276">MSITAERKQALVAEYANKVGDTGSPEVQIAVLSERISNLTNHFKSHKKDNHSRRGLLKMVSQRRRLLDYLKGVDQNRYQTLIKKLGLRR</sequence>
<name>RS15_BART1</name>
<proteinExistence type="inferred from homology"/>
<feature type="chain" id="PRO_1000086789" description="Small ribosomal subunit protein uS15">
    <location>
        <begin position="1"/>
        <end position="89"/>
    </location>
</feature>
<gene>
    <name evidence="1" type="primary">rpsO</name>
    <name type="ordered locus">BT_0233</name>
</gene>